<feature type="initiator methionine" description="Removed" evidence="1">
    <location>
        <position position="1"/>
    </location>
</feature>
<feature type="chain" id="PRO_0000275997" description="Photosystem I iron-sulfur center">
    <location>
        <begin position="2"/>
        <end position="81"/>
    </location>
</feature>
<feature type="domain" description="4Fe-4S ferredoxin-type 1" evidence="2">
    <location>
        <begin position="2"/>
        <end position="31"/>
    </location>
</feature>
<feature type="domain" description="4Fe-4S ferredoxin-type 2" evidence="2">
    <location>
        <begin position="39"/>
        <end position="68"/>
    </location>
</feature>
<feature type="binding site" evidence="2">
    <location>
        <position position="11"/>
    </location>
    <ligand>
        <name>[4Fe-4S] cluster</name>
        <dbReference type="ChEBI" id="CHEBI:49883"/>
        <label>1</label>
    </ligand>
</feature>
<feature type="binding site" evidence="2">
    <location>
        <position position="14"/>
    </location>
    <ligand>
        <name>[4Fe-4S] cluster</name>
        <dbReference type="ChEBI" id="CHEBI:49883"/>
        <label>1</label>
    </ligand>
</feature>
<feature type="binding site" evidence="2">
    <location>
        <position position="17"/>
    </location>
    <ligand>
        <name>[4Fe-4S] cluster</name>
        <dbReference type="ChEBI" id="CHEBI:49883"/>
        <label>1</label>
    </ligand>
</feature>
<feature type="binding site" evidence="2">
    <location>
        <position position="21"/>
    </location>
    <ligand>
        <name>[4Fe-4S] cluster</name>
        <dbReference type="ChEBI" id="CHEBI:49883"/>
        <label>2</label>
    </ligand>
</feature>
<feature type="binding site" evidence="2">
    <location>
        <position position="48"/>
    </location>
    <ligand>
        <name>[4Fe-4S] cluster</name>
        <dbReference type="ChEBI" id="CHEBI:49883"/>
        <label>2</label>
    </ligand>
</feature>
<feature type="binding site" evidence="2">
    <location>
        <position position="51"/>
    </location>
    <ligand>
        <name>[4Fe-4S] cluster</name>
        <dbReference type="ChEBI" id="CHEBI:49883"/>
        <label>2</label>
    </ligand>
</feature>
<feature type="binding site" evidence="2">
    <location>
        <position position="54"/>
    </location>
    <ligand>
        <name>[4Fe-4S] cluster</name>
        <dbReference type="ChEBI" id="CHEBI:49883"/>
        <label>2</label>
    </ligand>
</feature>
<feature type="binding site" evidence="2">
    <location>
        <position position="58"/>
    </location>
    <ligand>
        <name>[4Fe-4S] cluster</name>
        <dbReference type="ChEBI" id="CHEBI:49883"/>
        <label>1</label>
    </ligand>
</feature>
<gene>
    <name evidence="2" type="primary">psaC</name>
</gene>
<proteinExistence type="inferred from homology"/>
<protein>
    <recommendedName>
        <fullName evidence="2">Photosystem I iron-sulfur center</fullName>
        <ecNumber evidence="2">1.97.1.12</ecNumber>
    </recommendedName>
    <alternativeName>
        <fullName evidence="2">9 kDa polypeptide</fullName>
    </alternativeName>
    <alternativeName>
        <fullName evidence="2">PSI-C</fullName>
    </alternativeName>
    <alternativeName>
        <fullName evidence="2">Photosystem I subunit VII</fullName>
    </alternativeName>
    <alternativeName>
        <fullName evidence="2">PsaC</fullName>
    </alternativeName>
</protein>
<sequence>MSHTVKIYDTCIGCTQCVRACPTDVLEMAPWDGCKAGQVASAPRTEDCVGCKRCESACPTDFLSVRVYLGSETTRSMGLGY</sequence>
<accession>Q3ZJ03</accession>
<keyword id="KW-0004">4Fe-4S</keyword>
<keyword id="KW-0150">Chloroplast</keyword>
<keyword id="KW-0249">Electron transport</keyword>
<keyword id="KW-0408">Iron</keyword>
<keyword id="KW-0411">Iron-sulfur</keyword>
<keyword id="KW-0472">Membrane</keyword>
<keyword id="KW-0479">Metal-binding</keyword>
<keyword id="KW-0560">Oxidoreductase</keyword>
<keyword id="KW-0602">Photosynthesis</keyword>
<keyword id="KW-0603">Photosystem I</keyword>
<keyword id="KW-0934">Plastid</keyword>
<keyword id="KW-0677">Repeat</keyword>
<keyword id="KW-0793">Thylakoid</keyword>
<keyword id="KW-0813">Transport</keyword>
<name>PSAC_TUPAK</name>
<geneLocation type="chloroplast"/>
<reference key="1">
    <citation type="journal article" date="2005" name="Mol. Biol. Evol.">
        <title>The chloroplast genome sequence of the green alga Pseudendoclonium akinetum (Ulvophyceae) reveals unusual structural features and new insights into the branching order of chlorophyte lineages.</title>
        <authorList>
            <person name="Pombert J.-F."/>
            <person name="Otis C."/>
            <person name="Lemieux C."/>
            <person name="Turmel M."/>
        </authorList>
    </citation>
    <scope>NUCLEOTIDE SEQUENCE [LARGE SCALE GENOMIC DNA]</scope>
    <source>
        <strain>UTEX 1912</strain>
    </source>
</reference>
<organism>
    <name type="scientific">Tupiella akineta</name>
    <name type="common">Green alga</name>
    <name type="synonym">Pseudendoclonium akinetum</name>
    <dbReference type="NCBI Taxonomy" id="160070"/>
    <lineage>
        <taxon>Eukaryota</taxon>
        <taxon>Viridiplantae</taxon>
        <taxon>Chlorophyta</taxon>
        <taxon>Ulvophyceae</taxon>
        <taxon>OUU clade</taxon>
        <taxon>Ulotrichales</taxon>
        <taxon>Tupiellaceae</taxon>
        <taxon>Tupiella</taxon>
    </lineage>
</organism>
<comment type="function">
    <text evidence="2">Apoprotein for the two 4Fe-4S centers FA and FB of photosystem I (PSI); essential for photochemical activity. FB is the terminal electron acceptor of PSI, donating electrons to ferredoxin. The C-terminus interacts with PsaA/B/D and helps assemble the protein into the PSI complex. Required for binding of PsaD and PsaE to PSI. PSI is a plastocyanin/cytochrome c6-ferredoxin oxidoreductase, converting photonic excitation into a charge separation, which transfers an electron from the donor P700 chlorophyll pair to the spectroscopically characterized acceptors A0, A1, FX, FA and FB in turn.</text>
</comment>
<comment type="catalytic activity">
    <reaction evidence="2">
        <text>reduced [plastocyanin] + hnu + oxidized [2Fe-2S]-[ferredoxin] = oxidized [plastocyanin] + reduced [2Fe-2S]-[ferredoxin]</text>
        <dbReference type="Rhea" id="RHEA:30407"/>
        <dbReference type="Rhea" id="RHEA-COMP:10000"/>
        <dbReference type="Rhea" id="RHEA-COMP:10001"/>
        <dbReference type="Rhea" id="RHEA-COMP:10039"/>
        <dbReference type="Rhea" id="RHEA-COMP:10040"/>
        <dbReference type="ChEBI" id="CHEBI:29036"/>
        <dbReference type="ChEBI" id="CHEBI:30212"/>
        <dbReference type="ChEBI" id="CHEBI:33737"/>
        <dbReference type="ChEBI" id="CHEBI:33738"/>
        <dbReference type="ChEBI" id="CHEBI:49552"/>
        <dbReference type="EC" id="1.97.1.12"/>
    </reaction>
</comment>
<comment type="cofactor">
    <cofactor evidence="2">
        <name>[4Fe-4S] cluster</name>
        <dbReference type="ChEBI" id="CHEBI:49883"/>
    </cofactor>
    <text evidence="2">Binds 2 [4Fe-4S] clusters. Cluster 2 is most probably the spectroscopically characterized electron acceptor FA and cluster 1 is most probably FB.</text>
</comment>
<comment type="subunit">
    <text evidence="2">The eukaryotic PSI reaction center is composed of at least 11 subunits.</text>
</comment>
<comment type="subcellular location">
    <subcellularLocation>
        <location evidence="2">Plastid</location>
        <location evidence="2">Chloroplast thylakoid membrane</location>
        <topology evidence="2">Peripheral membrane protein</topology>
        <orientation evidence="2">Stromal side</orientation>
    </subcellularLocation>
</comment>
<dbReference type="EC" id="1.97.1.12" evidence="2"/>
<dbReference type="EMBL" id="AY835431">
    <property type="protein sequence ID" value="AAV80686.1"/>
    <property type="molecule type" value="Genomic_DNA"/>
</dbReference>
<dbReference type="RefSeq" id="YP_636264.1">
    <property type="nucleotide sequence ID" value="NC_008114.1"/>
</dbReference>
<dbReference type="SMR" id="Q3ZJ03"/>
<dbReference type="GeneID" id="4108830"/>
<dbReference type="GO" id="GO:0009535">
    <property type="term" value="C:chloroplast thylakoid membrane"/>
    <property type="evidence" value="ECO:0007669"/>
    <property type="project" value="UniProtKB-SubCell"/>
</dbReference>
<dbReference type="GO" id="GO:0009522">
    <property type="term" value="C:photosystem I"/>
    <property type="evidence" value="ECO:0007669"/>
    <property type="project" value="UniProtKB-KW"/>
</dbReference>
<dbReference type="GO" id="GO:0051539">
    <property type="term" value="F:4 iron, 4 sulfur cluster binding"/>
    <property type="evidence" value="ECO:0007669"/>
    <property type="project" value="UniProtKB-KW"/>
</dbReference>
<dbReference type="GO" id="GO:0009055">
    <property type="term" value="F:electron transfer activity"/>
    <property type="evidence" value="ECO:0007669"/>
    <property type="project" value="UniProtKB-UniRule"/>
</dbReference>
<dbReference type="GO" id="GO:0046872">
    <property type="term" value="F:metal ion binding"/>
    <property type="evidence" value="ECO:0007669"/>
    <property type="project" value="UniProtKB-KW"/>
</dbReference>
<dbReference type="GO" id="GO:0016491">
    <property type="term" value="F:oxidoreductase activity"/>
    <property type="evidence" value="ECO:0007669"/>
    <property type="project" value="UniProtKB-KW"/>
</dbReference>
<dbReference type="GO" id="GO:0009773">
    <property type="term" value="P:photosynthetic electron transport in photosystem I"/>
    <property type="evidence" value="ECO:0007669"/>
    <property type="project" value="InterPro"/>
</dbReference>
<dbReference type="FunFam" id="3.30.70.20:FF:000001">
    <property type="entry name" value="Photosystem I iron-sulfur center"/>
    <property type="match status" value="1"/>
</dbReference>
<dbReference type="Gene3D" id="3.30.70.20">
    <property type="match status" value="1"/>
</dbReference>
<dbReference type="HAMAP" id="MF_01303">
    <property type="entry name" value="PSI_PsaC"/>
    <property type="match status" value="1"/>
</dbReference>
<dbReference type="InterPro" id="IPR017896">
    <property type="entry name" value="4Fe4S_Fe-S-bd"/>
</dbReference>
<dbReference type="InterPro" id="IPR017900">
    <property type="entry name" value="4Fe4S_Fe_S_CS"/>
</dbReference>
<dbReference type="InterPro" id="IPR050157">
    <property type="entry name" value="PSI_iron-sulfur_center"/>
</dbReference>
<dbReference type="InterPro" id="IPR017491">
    <property type="entry name" value="PSI_PsaC"/>
</dbReference>
<dbReference type="NCBIfam" id="TIGR03048">
    <property type="entry name" value="PS_I_psaC"/>
    <property type="match status" value="1"/>
</dbReference>
<dbReference type="PANTHER" id="PTHR24960:SF79">
    <property type="entry name" value="PHOTOSYSTEM I IRON-SULFUR CENTER"/>
    <property type="match status" value="1"/>
</dbReference>
<dbReference type="PANTHER" id="PTHR24960">
    <property type="entry name" value="PHOTOSYSTEM I IRON-SULFUR CENTER-RELATED"/>
    <property type="match status" value="1"/>
</dbReference>
<dbReference type="Pfam" id="PF12838">
    <property type="entry name" value="Fer4_7"/>
    <property type="match status" value="1"/>
</dbReference>
<dbReference type="SUPFAM" id="SSF54862">
    <property type="entry name" value="4Fe-4S ferredoxins"/>
    <property type="match status" value="1"/>
</dbReference>
<dbReference type="PROSITE" id="PS00198">
    <property type="entry name" value="4FE4S_FER_1"/>
    <property type="match status" value="2"/>
</dbReference>
<dbReference type="PROSITE" id="PS51379">
    <property type="entry name" value="4FE4S_FER_2"/>
    <property type="match status" value="2"/>
</dbReference>
<evidence type="ECO:0000250" key="1"/>
<evidence type="ECO:0000255" key="2">
    <source>
        <dbReference type="HAMAP-Rule" id="MF_01303"/>
    </source>
</evidence>